<sequence>MIQQESYLSVADNSGAKRIQCIRVLGTNRRYAHVGDVIVAAVKDAMPNMGVKKSDVVKAVVVRTKATLRRDTGNSIRFDDNAAVIINADNNPKGTRVFGPVARELRERNFTKIVSLAPEVI</sequence>
<feature type="chain" id="PRO_1000055735" description="Large ribosomal subunit protein uL14">
    <location>
        <begin position="1"/>
        <end position="121"/>
    </location>
</feature>
<proteinExistence type="inferred from homology"/>
<gene>
    <name evidence="1" type="primary">rplN</name>
    <name evidence="1" type="synonym">rpl14</name>
    <name type="ordered locus">SYNW2077</name>
</gene>
<accession>Q7U4J0</accession>
<comment type="function">
    <text evidence="1">Binds to 23S rRNA. Forms part of two intersubunit bridges in the 70S ribosome.</text>
</comment>
<comment type="subunit">
    <text evidence="1">Part of the 50S ribosomal subunit. Forms a cluster with proteins L3 and L19. In the 70S ribosome, L14 and L19 interact and together make contacts with the 16S rRNA in bridges B5 and B8.</text>
</comment>
<comment type="similarity">
    <text evidence="1">Belongs to the universal ribosomal protein uL14 family.</text>
</comment>
<organism>
    <name type="scientific">Parasynechococcus marenigrum (strain WH8102)</name>
    <dbReference type="NCBI Taxonomy" id="84588"/>
    <lineage>
        <taxon>Bacteria</taxon>
        <taxon>Bacillati</taxon>
        <taxon>Cyanobacteriota</taxon>
        <taxon>Cyanophyceae</taxon>
        <taxon>Synechococcales</taxon>
        <taxon>Prochlorococcaceae</taxon>
        <taxon>Parasynechococcus</taxon>
        <taxon>Parasynechococcus marenigrum</taxon>
    </lineage>
</organism>
<protein>
    <recommendedName>
        <fullName evidence="1">Large ribosomal subunit protein uL14</fullName>
    </recommendedName>
    <alternativeName>
        <fullName evidence="2">50S ribosomal protein L14</fullName>
    </alternativeName>
</protein>
<evidence type="ECO:0000255" key="1">
    <source>
        <dbReference type="HAMAP-Rule" id="MF_01367"/>
    </source>
</evidence>
<evidence type="ECO:0000305" key="2"/>
<keyword id="KW-0687">Ribonucleoprotein</keyword>
<keyword id="KW-0689">Ribosomal protein</keyword>
<keyword id="KW-0694">RNA-binding</keyword>
<keyword id="KW-0699">rRNA-binding</keyword>
<name>RL14_PARMW</name>
<dbReference type="EMBL" id="BX569694">
    <property type="protein sequence ID" value="CAE08592.1"/>
    <property type="molecule type" value="Genomic_DNA"/>
</dbReference>
<dbReference type="RefSeq" id="WP_011128935.1">
    <property type="nucleotide sequence ID" value="NC_005070.1"/>
</dbReference>
<dbReference type="SMR" id="Q7U4J0"/>
<dbReference type="STRING" id="84588.SYNW2077"/>
<dbReference type="KEGG" id="syw:SYNW2077"/>
<dbReference type="eggNOG" id="COG0093">
    <property type="taxonomic scope" value="Bacteria"/>
</dbReference>
<dbReference type="HOGENOM" id="CLU_095071_2_1_3"/>
<dbReference type="Proteomes" id="UP000001422">
    <property type="component" value="Chromosome"/>
</dbReference>
<dbReference type="GO" id="GO:0022625">
    <property type="term" value="C:cytosolic large ribosomal subunit"/>
    <property type="evidence" value="ECO:0007669"/>
    <property type="project" value="TreeGrafter"/>
</dbReference>
<dbReference type="GO" id="GO:0070180">
    <property type="term" value="F:large ribosomal subunit rRNA binding"/>
    <property type="evidence" value="ECO:0007669"/>
    <property type="project" value="TreeGrafter"/>
</dbReference>
<dbReference type="GO" id="GO:0003735">
    <property type="term" value="F:structural constituent of ribosome"/>
    <property type="evidence" value="ECO:0007669"/>
    <property type="project" value="InterPro"/>
</dbReference>
<dbReference type="GO" id="GO:0006412">
    <property type="term" value="P:translation"/>
    <property type="evidence" value="ECO:0007669"/>
    <property type="project" value="UniProtKB-UniRule"/>
</dbReference>
<dbReference type="CDD" id="cd00337">
    <property type="entry name" value="Ribosomal_uL14"/>
    <property type="match status" value="1"/>
</dbReference>
<dbReference type="FunFam" id="2.40.150.20:FF:000001">
    <property type="entry name" value="50S ribosomal protein L14"/>
    <property type="match status" value="1"/>
</dbReference>
<dbReference type="Gene3D" id="2.40.150.20">
    <property type="entry name" value="Ribosomal protein L14"/>
    <property type="match status" value="1"/>
</dbReference>
<dbReference type="HAMAP" id="MF_01367">
    <property type="entry name" value="Ribosomal_uL14"/>
    <property type="match status" value="1"/>
</dbReference>
<dbReference type="InterPro" id="IPR000218">
    <property type="entry name" value="Ribosomal_uL14"/>
</dbReference>
<dbReference type="InterPro" id="IPR005745">
    <property type="entry name" value="Ribosomal_uL14_bac-type"/>
</dbReference>
<dbReference type="InterPro" id="IPR036853">
    <property type="entry name" value="Ribosomal_uL14_sf"/>
</dbReference>
<dbReference type="NCBIfam" id="TIGR01067">
    <property type="entry name" value="rplN_bact"/>
    <property type="match status" value="1"/>
</dbReference>
<dbReference type="PANTHER" id="PTHR11761">
    <property type="entry name" value="50S/60S RIBOSOMAL PROTEIN L14/L23"/>
    <property type="match status" value="1"/>
</dbReference>
<dbReference type="PANTHER" id="PTHR11761:SF3">
    <property type="entry name" value="LARGE RIBOSOMAL SUBUNIT PROTEIN UL14M"/>
    <property type="match status" value="1"/>
</dbReference>
<dbReference type="Pfam" id="PF00238">
    <property type="entry name" value="Ribosomal_L14"/>
    <property type="match status" value="1"/>
</dbReference>
<dbReference type="SMART" id="SM01374">
    <property type="entry name" value="Ribosomal_L14"/>
    <property type="match status" value="1"/>
</dbReference>
<dbReference type="SUPFAM" id="SSF50193">
    <property type="entry name" value="Ribosomal protein L14"/>
    <property type="match status" value="1"/>
</dbReference>
<reference key="1">
    <citation type="journal article" date="2003" name="Nature">
        <title>The genome of a motile marine Synechococcus.</title>
        <authorList>
            <person name="Palenik B."/>
            <person name="Brahamsha B."/>
            <person name="Larimer F.W."/>
            <person name="Land M.L."/>
            <person name="Hauser L."/>
            <person name="Chain P."/>
            <person name="Lamerdin J.E."/>
            <person name="Regala W."/>
            <person name="Allen E.E."/>
            <person name="McCarren J."/>
            <person name="Paulsen I.T."/>
            <person name="Dufresne A."/>
            <person name="Partensky F."/>
            <person name="Webb E.A."/>
            <person name="Waterbury J."/>
        </authorList>
    </citation>
    <scope>NUCLEOTIDE SEQUENCE [LARGE SCALE GENOMIC DNA]</scope>
    <source>
        <strain>WH8102</strain>
    </source>
</reference>